<gene>
    <name evidence="1" type="primary">trpA</name>
    <name type="ordered locus">BH1664</name>
</gene>
<organism>
    <name type="scientific">Halalkalibacterium halodurans (strain ATCC BAA-125 / DSM 18197 / FERM 7344 / JCM 9153 / C-125)</name>
    <name type="common">Bacillus halodurans</name>
    <dbReference type="NCBI Taxonomy" id="272558"/>
    <lineage>
        <taxon>Bacteria</taxon>
        <taxon>Bacillati</taxon>
        <taxon>Bacillota</taxon>
        <taxon>Bacilli</taxon>
        <taxon>Bacillales</taxon>
        <taxon>Bacillaceae</taxon>
        <taxon>Halalkalibacterium (ex Joshi et al. 2022)</taxon>
    </lineage>
</organism>
<dbReference type="EC" id="4.2.1.20" evidence="1"/>
<dbReference type="EMBL" id="BA000004">
    <property type="protein sequence ID" value="BAB05383.1"/>
    <property type="molecule type" value="Genomic_DNA"/>
</dbReference>
<dbReference type="PIR" id="H83857">
    <property type="entry name" value="H83857"/>
</dbReference>
<dbReference type="RefSeq" id="WP_010897826.1">
    <property type="nucleotide sequence ID" value="NC_002570.2"/>
</dbReference>
<dbReference type="SMR" id="Q9KCA9"/>
<dbReference type="STRING" id="272558.gene:10727562"/>
<dbReference type="KEGG" id="bha:BH1664"/>
<dbReference type="eggNOG" id="COG0159">
    <property type="taxonomic scope" value="Bacteria"/>
</dbReference>
<dbReference type="HOGENOM" id="CLU_016734_0_4_9"/>
<dbReference type="OrthoDB" id="9804578at2"/>
<dbReference type="UniPathway" id="UPA00035">
    <property type="reaction ID" value="UER00044"/>
</dbReference>
<dbReference type="Proteomes" id="UP000001258">
    <property type="component" value="Chromosome"/>
</dbReference>
<dbReference type="GO" id="GO:0005829">
    <property type="term" value="C:cytosol"/>
    <property type="evidence" value="ECO:0007669"/>
    <property type="project" value="TreeGrafter"/>
</dbReference>
<dbReference type="GO" id="GO:0004834">
    <property type="term" value="F:tryptophan synthase activity"/>
    <property type="evidence" value="ECO:0007669"/>
    <property type="project" value="UniProtKB-UniRule"/>
</dbReference>
<dbReference type="CDD" id="cd04724">
    <property type="entry name" value="Tryptophan_synthase_alpha"/>
    <property type="match status" value="1"/>
</dbReference>
<dbReference type="FunFam" id="3.20.20.70:FF:000037">
    <property type="entry name" value="Tryptophan synthase alpha chain"/>
    <property type="match status" value="1"/>
</dbReference>
<dbReference type="Gene3D" id="3.20.20.70">
    <property type="entry name" value="Aldolase class I"/>
    <property type="match status" value="1"/>
</dbReference>
<dbReference type="HAMAP" id="MF_00131">
    <property type="entry name" value="Trp_synth_alpha"/>
    <property type="match status" value="1"/>
</dbReference>
<dbReference type="InterPro" id="IPR013785">
    <property type="entry name" value="Aldolase_TIM"/>
</dbReference>
<dbReference type="InterPro" id="IPR011060">
    <property type="entry name" value="RibuloseP-bd_barrel"/>
</dbReference>
<dbReference type="InterPro" id="IPR018204">
    <property type="entry name" value="Trp_synthase_alpha_AS"/>
</dbReference>
<dbReference type="InterPro" id="IPR002028">
    <property type="entry name" value="Trp_synthase_suA"/>
</dbReference>
<dbReference type="NCBIfam" id="TIGR00262">
    <property type="entry name" value="trpA"/>
    <property type="match status" value="1"/>
</dbReference>
<dbReference type="PANTHER" id="PTHR43406:SF1">
    <property type="entry name" value="TRYPTOPHAN SYNTHASE ALPHA CHAIN, CHLOROPLASTIC"/>
    <property type="match status" value="1"/>
</dbReference>
<dbReference type="PANTHER" id="PTHR43406">
    <property type="entry name" value="TRYPTOPHAN SYNTHASE, ALPHA CHAIN"/>
    <property type="match status" value="1"/>
</dbReference>
<dbReference type="Pfam" id="PF00290">
    <property type="entry name" value="Trp_syntA"/>
    <property type="match status" value="1"/>
</dbReference>
<dbReference type="SUPFAM" id="SSF51366">
    <property type="entry name" value="Ribulose-phoshate binding barrel"/>
    <property type="match status" value="1"/>
</dbReference>
<dbReference type="PROSITE" id="PS00167">
    <property type="entry name" value="TRP_SYNTHASE_ALPHA"/>
    <property type="match status" value="1"/>
</dbReference>
<reference key="1">
    <citation type="journal article" date="2000" name="Nucleic Acids Res.">
        <title>Complete genome sequence of the alkaliphilic bacterium Bacillus halodurans and genomic sequence comparison with Bacillus subtilis.</title>
        <authorList>
            <person name="Takami H."/>
            <person name="Nakasone K."/>
            <person name="Takaki Y."/>
            <person name="Maeno G."/>
            <person name="Sasaki R."/>
            <person name="Masui N."/>
            <person name="Fuji F."/>
            <person name="Hirama C."/>
            <person name="Nakamura Y."/>
            <person name="Ogasawara N."/>
            <person name="Kuhara S."/>
            <person name="Horikoshi K."/>
        </authorList>
    </citation>
    <scope>NUCLEOTIDE SEQUENCE [LARGE SCALE GENOMIC DNA]</scope>
    <source>
        <strain>ATCC BAA-125 / DSM 18197 / FERM 7344 / JCM 9153 / C-125</strain>
    </source>
</reference>
<feature type="chain" id="PRO_0000098738" description="Tryptophan synthase alpha chain">
    <location>
        <begin position="1"/>
        <end position="265"/>
    </location>
</feature>
<feature type="active site" description="Proton acceptor" evidence="1">
    <location>
        <position position="45"/>
    </location>
</feature>
<feature type="active site" description="Proton acceptor" evidence="1">
    <location>
        <position position="56"/>
    </location>
</feature>
<evidence type="ECO:0000255" key="1">
    <source>
        <dbReference type="HAMAP-Rule" id="MF_00131"/>
    </source>
</evidence>
<sequence>MSRLEAAVNGKKNLFIPFITAGDPNPEVTIELALTLEEAGADILELGIPYSDPLADGPVIQAASKRALKHEMTLEKALSLVPKMRAQGLTIPVIVFTYVNPLLQYGEEQFVKRAADYQVDGILVPDMPFEEGEVLQAACQEHNLSLISLVAPTSNKRIEKIAARAQGFVYCVSSLGVTGLRDELDPRVHEFLQTVKTHASVPVVVGFGISRREQVEALAENADGVVVGSAIVKLVGELEDELNDPEKLEDGLFKIKRFVSELISS</sequence>
<protein>
    <recommendedName>
        <fullName evidence="1">Tryptophan synthase alpha chain</fullName>
        <ecNumber evidence="1">4.2.1.20</ecNumber>
    </recommendedName>
</protein>
<keyword id="KW-0028">Amino-acid biosynthesis</keyword>
<keyword id="KW-0057">Aromatic amino acid biosynthesis</keyword>
<keyword id="KW-0456">Lyase</keyword>
<keyword id="KW-1185">Reference proteome</keyword>
<keyword id="KW-0822">Tryptophan biosynthesis</keyword>
<name>TRPA_HALH5</name>
<comment type="function">
    <text evidence="1">The alpha subunit is responsible for the aldol cleavage of indoleglycerol phosphate to indole and glyceraldehyde 3-phosphate.</text>
</comment>
<comment type="catalytic activity">
    <reaction evidence="1">
        <text>(1S,2R)-1-C-(indol-3-yl)glycerol 3-phosphate + L-serine = D-glyceraldehyde 3-phosphate + L-tryptophan + H2O</text>
        <dbReference type="Rhea" id="RHEA:10532"/>
        <dbReference type="ChEBI" id="CHEBI:15377"/>
        <dbReference type="ChEBI" id="CHEBI:33384"/>
        <dbReference type="ChEBI" id="CHEBI:57912"/>
        <dbReference type="ChEBI" id="CHEBI:58866"/>
        <dbReference type="ChEBI" id="CHEBI:59776"/>
        <dbReference type="EC" id="4.2.1.20"/>
    </reaction>
</comment>
<comment type="pathway">
    <text evidence="1">Amino-acid biosynthesis; L-tryptophan biosynthesis; L-tryptophan from chorismate: step 5/5.</text>
</comment>
<comment type="subunit">
    <text evidence="1">Tetramer of two alpha and two beta chains.</text>
</comment>
<comment type="similarity">
    <text evidence="1">Belongs to the TrpA family.</text>
</comment>
<accession>Q9KCA9</accession>
<proteinExistence type="inferred from homology"/>